<gene>
    <name evidence="1" type="primary">psaI</name>
</gene>
<name>PSAI_SOLTU</name>
<proteinExistence type="inferred from homology"/>
<protein>
    <recommendedName>
        <fullName evidence="1">Photosystem I reaction center subunit VIII</fullName>
        <shortName evidence="1">PSI-I</shortName>
    </recommendedName>
</protein>
<reference key="1">
    <citation type="journal article" date="2006" name="Plant Cell Rep.">
        <title>The complete chloroplast genome sequences of Solanum tuberosum and comparative analysis with Solanaceae species identified the presence of a 241-bp deletion in cultivated potato chloroplast DNA sequence.</title>
        <authorList>
            <person name="Chung H.-J."/>
            <person name="Jung J.D."/>
            <person name="Park H.-W."/>
            <person name="Kim J.-H."/>
            <person name="Cha H.W."/>
            <person name="Min S.R."/>
            <person name="Jeong W.-J."/>
            <person name="Liu J.R."/>
        </authorList>
    </citation>
    <scope>NUCLEOTIDE SEQUENCE [LARGE SCALE GENOMIC DNA]</scope>
    <source>
        <strain>cv. Desiree</strain>
    </source>
</reference>
<reference key="2">
    <citation type="submission" date="2006-02" db="EMBL/GenBank/DDBJ databases">
        <title>Complete chloroplast genome sequences of Solanum tuberosum cultivar Desiree and comparative analyses with other Solanaceae genomes.</title>
        <authorList>
            <person name="Gargano D."/>
            <person name="Scotti N."/>
            <person name="Vezzi A."/>
            <person name="Bilardi A."/>
            <person name="Valle G."/>
            <person name="Grillo S."/>
            <person name="Cardi T."/>
        </authorList>
    </citation>
    <scope>NUCLEOTIDE SEQUENCE [LARGE SCALE GENOMIC DNA]</scope>
    <source>
        <strain>cv. Desiree</strain>
    </source>
</reference>
<dbReference type="EMBL" id="DQ231562">
    <property type="protein sequence ID" value="ABB90051.1"/>
    <property type="molecule type" value="Genomic_DNA"/>
</dbReference>
<dbReference type="EMBL" id="DQ386163">
    <property type="protein sequence ID" value="ABD47067.1"/>
    <property type="molecule type" value="Genomic_DNA"/>
</dbReference>
<dbReference type="RefSeq" id="YP_635649.1">
    <property type="nucleotide sequence ID" value="NC_008096.2"/>
</dbReference>
<dbReference type="SMR" id="Q2VEG7"/>
<dbReference type="FunCoup" id="Q2VEG7">
    <property type="interactions" value="19"/>
</dbReference>
<dbReference type="STRING" id="4113.Q2VEG7"/>
<dbReference type="GeneID" id="4099987"/>
<dbReference type="KEGG" id="sot:4099987"/>
<dbReference type="InParanoid" id="Q2VEG7"/>
<dbReference type="OrthoDB" id="970998at2759"/>
<dbReference type="Proteomes" id="UP000011115">
    <property type="component" value="Unassembled WGS sequence"/>
</dbReference>
<dbReference type="GO" id="GO:0009535">
    <property type="term" value="C:chloroplast thylakoid membrane"/>
    <property type="evidence" value="ECO:0007669"/>
    <property type="project" value="UniProtKB-SubCell"/>
</dbReference>
<dbReference type="GO" id="GO:0009522">
    <property type="term" value="C:photosystem I"/>
    <property type="evidence" value="ECO:0007669"/>
    <property type="project" value="UniProtKB-KW"/>
</dbReference>
<dbReference type="GO" id="GO:0015979">
    <property type="term" value="P:photosynthesis"/>
    <property type="evidence" value="ECO:0007669"/>
    <property type="project" value="UniProtKB-UniRule"/>
</dbReference>
<dbReference type="HAMAP" id="MF_00431">
    <property type="entry name" value="PSI_PsaI"/>
    <property type="match status" value="1"/>
</dbReference>
<dbReference type="InterPro" id="IPR001302">
    <property type="entry name" value="PSI_PsaI"/>
</dbReference>
<dbReference type="InterPro" id="IPR036357">
    <property type="entry name" value="PSI_PsaI_sf"/>
</dbReference>
<dbReference type="NCBIfam" id="TIGR03052">
    <property type="entry name" value="PS_I_psaI"/>
    <property type="match status" value="1"/>
</dbReference>
<dbReference type="PANTHER" id="PTHR35775">
    <property type="match status" value="1"/>
</dbReference>
<dbReference type="PANTHER" id="PTHR35775:SF2">
    <property type="entry name" value="PHOTOSYSTEM I REACTION CENTER SUBUNIT VIII"/>
    <property type="match status" value="1"/>
</dbReference>
<dbReference type="Pfam" id="PF00796">
    <property type="entry name" value="PSI_8"/>
    <property type="match status" value="1"/>
</dbReference>
<dbReference type="SUPFAM" id="SSF81540">
    <property type="entry name" value="Subunit VIII of photosystem I reaction centre, PsaI"/>
    <property type="match status" value="1"/>
</dbReference>
<geneLocation type="chloroplast"/>
<organism>
    <name type="scientific">Solanum tuberosum</name>
    <name type="common">Potato</name>
    <dbReference type="NCBI Taxonomy" id="4113"/>
    <lineage>
        <taxon>Eukaryota</taxon>
        <taxon>Viridiplantae</taxon>
        <taxon>Streptophyta</taxon>
        <taxon>Embryophyta</taxon>
        <taxon>Tracheophyta</taxon>
        <taxon>Spermatophyta</taxon>
        <taxon>Magnoliopsida</taxon>
        <taxon>eudicotyledons</taxon>
        <taxon>Gunneridae</taxon>
        <taxon>Pentapetalae</taxon>
        <taxon>asterids</taxon>
        <taxon>lamiids</taxon>
        <taxon>Solanales</taxon>
        <taxon>Solanaceae</taxon>
        <taxon>Solanoideae</taxon>
        <taxon>Solaneae</taxon>
        <taxon>Solanum</taxon>
    </lineage>
</organism>
<evidence type="ECO:0000255" key="1">
    <source>
        <dbReference type="HAMAP-Rule" id="MF_00431"/>
    </source>
</evidence>
<accession>Q2VEG7</accession>
<keyword id="KW-0150">Chloroplast</keyword>
<keyword id="KW-0472">Membrane</keyword>
<keyword id="KW-0602">Photosynthesis</keyword>
<keyword id="KW-0603">Photosystem I</keyword>
<keyword id="KW-0934">Plastid</keyword>
<keyword id="KW-1185">Reference proteome</keyword>
<keyword id="KW-0793">Thylakoid</keyword>
<keyword id="KW-0812">Transmembrane</keyword>
<keyword id="KW-1133">Transmembrane helix</keyword>
<comment type="function">
    <text evidence="1">May help in the organization of the PsaL subunit.</text>
</comment>
<comment type="subcellular location">
    <subcellularLocation>
        <location evidence="1">Plastid</location>
        <location evidence="1">Chloroplast thylakoid membrane</location>
        <topology evidence="1">Single-pass membrane protein</topology>
    </subcellularLocation>
</comment>
<comment type="similarity">
    <text evidence="1">Belongs to the PsaI family.</text>
</comment>
<feature type="chain" id="PRO_0000276039" description="Photosystem I reaction center subunit VIII">
    <location>
        <begin position="1"/>
        <end position="36"/>
    </location>
</feature>
<feature type="transmembrane region" description="Helical" evidence="1">
    <location>
        <begin position="8"/>
        <end position="28"/>
    </location>
</feature>
<sequence length="36" mass="3937">MTNLNLPSIFVPLVGLVFPAIAMASLFLHVQKNKIV</sequence>